<reference key="1">
    <citation type="journal article" date="2018" name="Microb. Biotechnol.">
        <title>Insight into metabolic diversity of the brown-rot basidiomycete Postia placenta responsible for sesquiterpene biosynthesis: semi-comprehensive screening of cytochrome P450 monooxygenase involved in protoilludene metabolism.</title>
        <authorList>
            <person name="Ichinose H."/>
            <person name="Kitaoka T."/>
        </authorList>
    </citation>
    <scope>NUCLEOTIDE SEQUENCE [MRNA]</scope>
    <scope>FUNCTION</scope>
    <scope>DOMAIN</scope>
    <scope>CATALYTIC ACTIVITY</scope>
    <source>
        <strain>ATCC 44394 / Madison 698-R</strain>
    </source>
</reference>
<comment type="function">
    <text evidence="4">Terpene cyclase that catalyzes the cyclization of farnesyl diphosphate (FPP) to pentalenene as a major product, as well as caryophyllene.</text>
</comment>
<comment type="catalytic activity">
    <reaction evidence="4">
        <text>(2E,6E)-farnesyl diphosphate = pentalenene + diphosphate</text>
        <dbReference type="Rhea" id="RHEA:18081"/>
        <dbReference type="ChEBI" id="CHEBI:17251"/>
        <dbReference type="ChEBI" id="CHEBI:33019"/>
        <dbReference type="ChEBI" id="CHEBI:175763"/>
        <dbReference type="EC" id="4.2.3.7"/>
    </reaction>
    <physiologicalReaction direction="left-to-right" evidence="4">
        <dbReference type="Rhea" id="RHEA:18082"/>
    </physiologicalReaction>
</comment>
<comment type="cofactor">
    <cofactor evidence="2">
        <name>Mg(2+)</name>
        <dbReference type="ChEBI" id="CHEBI:18420"/>
    </cofactor>
</comment>
<comment type="domain">
    <text evidence="7">The conserved DDXXD and NSE/DTE motifs are important for the catalytic activity, presumably through binding to Mg(2+).</text>
</comment>
<comment type="similarity">
    <text evidence="6">Belongs to the terpene synthase family.</text>
</comment>
<evidence type="ECO:0000250" key="1">
    <source>
        <dbReference type="UniProtKB" id="B5HDJ6"/>
    </source>
</evidence>
<evidence type="ECO:0000250" key="2">
    <source>
        <dbReference type="UniProtKB" id="I3ZNU9"/>
    </source>
</evidence>
<evidence type="ECO:0000250" key="3">
    <source>
        <dbReference type="UniProtKB" id="Q9UR08"/>
    </source>
</evidence>
<evidence type="ECO:0000269" key="4">
    <source>
    </source>
</evidence>
<evidence type="ECO:0000303" key="5">
    <source>
    </source>
</evidence>
<evidence type="ECO:0000305" key="6"/>
<evidence type="ECO:0000305" key="7">
    <source>
    </source>
</evidence>
<name>STS14_POSPM</name>
<accession>A0A348B788</accession>
<dbReference type="EC" id="4.2.3.-" evidence="4"/>
<dbReference type="EC" id="4.2.3.7" evidence="4"/>
<dbReference type="EMBL" id="LC378434">
    <property type="protein sequence ID" value="BBD74526.1"/>
    <property type="molecule type" value="mRNA"/>
</dbReference>
<dbReference type="SMR" id="A0A348B788"/>
<dbReference type="GO" id="GO:0046872">
    <property type="term" value="F:metal ion binding"/>
    <property type="evidence" value="ECO:0007669"/>
    <property type="project" value="UniProtKB-KW"/>
</dbReference>
<dbReference type="GO" id="GO:0050467">
    <property type="term" value="F:pentalenene synthase activity"/>
    <property type="evidence" value="ECO:0007669"/>
    <property type="project" value="UniProtKB-EC"/>
</dbReference>
<dbReference type="GO" id="GO:0008299">
    <property type="term" value="P:isoprenoid biosynthetic process"/>
    <property type="evidence" value="ECO:0007669"/>
    <property type="project" value="UniProtKB-ARBA"/>
</dbReference>
<dbReference type="Gene3D" id="1.10.600.10">
    <property type="entry name" value="Farnesyl Diphosphate Synthase"/>
    <property type="match status" value="1"/>
</dbReference>
<dbReference type="InterPro" id="IPR008949">
    <property type="entry name" value="Isoprenoid_synthase_dom_sf"/>
</dbReference>
<dbReference type="InterPro" id="IPR034686">
    <property type="entry name" value="Terpene_cyclase-like_2"/>
</dbReference>
<dbReference type="PANTHER" id="PTHR35201:SF4">
    <property type="entry name" value="BETA-PINACENE SYNTHASE-RELATED"/>
    <property type="match status" value="1"/>
</dbReference>
<dbReference type="PANTHER" id="PTHR35201">
    <property type="entry name" value="TERPENE SYNTHASE"/>
    <property type="match status" value="1"/>
</dbReference>
<dbReference type="Pfam" id="PF19086">
    <property type="entry name" value="Terpene_syn_C_2"/>
    <property type="match status" value="1"/>
</dbReference>
<dbReference type="SFLD" id="SFLDS00005">
    <property type="entry name" value="Isoprenoid_Synthase_Type_I"/>
    <property type="match status" value="1"/>
</dbReference>
<dbReference type="SFLD" id="SFLDG01020">
    <property type="entry name" value="Terpene_Cyclase_Like_2"/>
    <property type="match status" value="1"/>
</dbReference>
<dbReference type="SUPFAM" id="SSF48576">
    <property type="entry name" value="Terpenoid synthases"/>
    <property type="match status" value="1"/>
</dbReference>
<proteinExistence type="evidence at protein level"/>
<organism>
    <name type="scientific">Postia placenta (strain ATCC 44394 / Madison 698-R)</name>
    <name type="common">Brown rot fungus</name>
    <name type="synonym">Poria monticola</name>
    <dbReference type="NCBI Taxonomy" id="561896"/>
    <lineage>
        <taxon>Eukaryota</taxon>
        <taxon>Fungi</taxon>
        <taxon>Dikarya</taxon>
        <taxon>Basidiomycota</taxon>
        <taxon>Agaricomycotina</taxon>
        <taxon>Agaricomycetes</taxon>
        <taxon>Polyporales</taxon>
        <taxon>Adustoporiaceae</taxon>
        <taxon>Rhodonia</taxon>
    </lineage>
</organism>
<feature type="chain" id="PRO_0000451393" description="Sesquiterpene synthase 14">
    <location>
        <begin position="1"/>
        <end position="351"/>
    </location>
</feature>
<feature type="short sequence motif" description="DDXXD motif" evidence="7">
    <location>
        <begin position="87"/>
        <end position="91"/>
    </location>
</feature>
<feature type="short sequence motif" description="NSE/DTE motif" evidence="7">
    <location>
        <begin position="223"/>
        <end position="231"/>
    </location>
</feature>
<feature type="binding site" evidence="3">
    <location>
        <position position="87"/>
    </location>
    <ligand>
        <name>Mg(2+)</name>
        <dbReference type="ChEBI" id="CHEBI:18420"/>
        <label>1</label>
    </ligand>
</feature>
<feature type="binding site" evidence="3">
    <location>
        <position position="87"/>
    </location>
    <ligand>
        <name>Mg(2+)</name>
        <dbReference type="ChEBI" id="CHEBI:18420"/>
        <label>2</label>
    </ligand>
</feature>
<feature type="binding site" evidence="3">
    <location>
        <position position="223"/>
    </location>
    <ligand>
        <name>Mg(2+)</name>
        <dbReference type="ChEBI" id="CHEBI:18420"/>
        <label>3</label>
    </ligand>
</feature>
<feature type="binding site" evidence="3">
    <location>
        <position position="227"/>
    </location>
    <ligand>
        <name>Mg(2+)</name>
        <dbReference type="ChEBI" id="CHEBI:18420"/>
        <label>3</label>
    </ligand>
</feature>
<feature type="binding site" evidence="3">
    <location>
        <position position="231"/>
    </location>
    <ligand>
        <name>Mg(2+)</name>
        <dbReference type="ChEBI" id="CHEBI:18420"/>
        <label>3</label>
    </ligand>
</feature>
<feature type="binding site" evidence="3">
    <location>
        <position position="312"/>
    </location>
    <ligand>
        <name>(2E,6E)-farnesyl diphosphate</name>
        <dbReference type="ChEBI" id="CHEBI:175763"/>
    </ligand>
</feature>
<feature type="binding site" evidence="3">
    <location>
        <position position="313"/>
    </location>
    <ligand>
        <name>(2E,6E)-farnesyl diphosphate</name>
        <dbReference type="ChEBI" id="CHEBI:175763"/>
    </ligand>
</feature>
<feature type="site" description="Plays a critical role in the stabilization of intermediate cation" evidence="1">
    <location>
        <position position="84"/>
    </location>
</feature>
<gene>
    <name evidence="5" type="primary">STS-14</name>
</gene>
<sequence>MSDQPKMIYLPETMANWPWPRYINPHYEEVKAESDAWFKGFKPFTKQSQVAFDKCDFGRLASLAYPWASKEHLRTGCDLMNVFFMIDEYTDVECASVVRGMVDIVIDVINNPHKPRPEGESLLGEITRQFWERAIKAATPSSQKHFIEAFTDYLNSVVEQAADRDNNHIRTVDSYLKTRRENIGARPSYFPAELGLNLPDEAFYHPVVTELSYNIAELIILDNDIASYNKEQATGDDRHNILTIVMLQFNIDLEAAMTWVASYHKDVENKFLDGMKKLPSFGPVVDKELEEYILALAIWPRTNDCWNFESGRYFGSKGLQVQKTRYVPLLPKVKTDPTLKQKQVVVSLVDL</sequence>
<keyword id="KW-0456">Lyase</keyword>
<keyword id="KW-0460">Magnesium</keyword>
<keyword id="KW-0479">Metal-binding</keyword>
<protein>
    <recommendedName>
        <fullName evidence="5">Sesquiterpene synthase 14</fullName>
        <ecNumber evidence="4">4.2.3.-</ecNumber>
        <ecNumber evidence="4">4.2.3.7</ecNumber>
    </recommendedName>
    <alternativeName>
        <fullName evidence="5">Terpene cyclase 14</fullName>
    </alternativeName>
</protein>